<accession>P0CX16</accession>
<accession>D3DLH5</accession>
<accession>P89887</accession>
<reference key="1">
    <citation type="journal article" date="1997" name="Nature">
        <title>The nucleotide sequence of Saccharomyces cerevisiae chromosome V.</title>
        <authorList>
            <person name="Dietrich F.S."/>
            <person name="Mulligan J.T."/>
            <person name="Hennessy K.M."/>
            <person name="Yelton M.A."/>
            <person name="Allen E."/>
            <person name="Araujo R."/>
            <person name="Aviles E."/>
            <person name="Berno A."/>
            <person name="Brennan T."/>
            <person name="Carpenter J."/>
            <person name="Chen E."/>
            <person name="Cherry J.M."/>
            <person name="Chung E."/>
            <person name="Duncan M."/>
            <person name="Guzman E."/>
            <person name="Hartzell G."/>
            <person name="Hunicke-Smith S."/>
            <person name="Hyman R.W."/>
            <person name="Kayser A."/>
            <person name="Komp C."/>
            <person name="Lashkari D."/>
            <person name="Lew H."/>
            <person name="Lin D."/>
            <person name="Mosedale D."/>
            <person name="Nakahara K."/>
            <person name="Namath A."/>
            <person name="Norgren R."/>
            <person name="Oefner P."/>
            <person name="Oh C."/>
            <person name="Petel F.X."/>
            <person name="Roberts D."/>
            <person name="Sehl P."/>
            <person name="Schramm S."/>
            <person name="Shogren T."/>
            <person name="Smith V."/>
            <person name="Taylor P."/>
            <person name="Wei Y."/>
            <person name="Botstein D."/>
            <person name="Davis R.W."/>
        </authorList>
    </citation>
    <scope>NUCLEOTIDE SEQUENCE [LARGE SCALE GENOMIC DNA]</scope>
    <source>
        <strain>ATCC 204508 / S288c</strain>
    </source>
</reference>
<reference key="2">
    <citation type="journal article" date="2014" name="G3 (Bethesda)">
        <title>The reference genome sequence of Saccharomyces cerevisiae: Then and now.</title>
        <authorList>
            <person name="Engel S.R."/>
            <person name="Dietrich F.S."/>
            <person name="Fisk D.G."/>
            <person name="Binkley G."/>
            <person name="Balakrishnan R."/>
            <person name="Costanzo M.C."/>
            <person name="Dwight S.S."/>
            <person name="Hitz B.C."/>
            <person name="Karra K."/>
            <person name="Nash R.S."/>
            <person name="Weng S."/>
            <person name="Wong E.D."/>
            <person name="Lloyd P."/>
            <person name="Skrzypek M.S."/>
            <person name="Miyasato S.R."/>
            <person name="Simison M."/>
            <person name="Cherry J.M."/>
        </authorList>
    </citation>
    <scope>GENOME REANNOTATION</scope>
    <source>
        <strain>ATCC 204508 / S288c</strain>
    </source>
</reference>
<comment type="similarity">
    <text evidence="1">Belongs to the helicase family. Yeast subtelomeric Y' repeat subfamily.</text>
</comment>
<comment type="caution">
    <text evidence="1">Could be the product of a pseudogene. Although strongly related to DNA helicases, it lacks the helicase domains, suggesting that it has no helicase activity.</text>
</comment>
<sequence>MQASLPGEKKVDTERLKRDLCPRKPIEIKYFSQICNDMMNKKDRLGDILHIILRACALNFGAGPRGGAGDEEDRSITNEEPIIPSVDEHGLKVCKLRSPNTPRRLRKTLDAVKALLVSSCACTARDLDIFDDNNGVAMWKWIKILYHEVAQETTLKDSYRITLVPSSDGISDTLTVIQSFSYSLLPVLSATYTSMIQQDASNCTLITTRTVHRSLD</sequence>
<dbReference type="EMBL" id="U18795">
    <property type="protein sequence ID" value="AAB65034.1"/>
    <property type="molecule type" value="Genomic_DNA"/>
</dbReference>
<dbReference type="EMBL" id="BK006939">
    <property type="protein sequence ID" value="DAA07579.1"/>
    <property type="molecule type" value="Genomic_DNA"/>
</dbReference>
<dbReference type="PIR" id="S70308">
    <property type="entry name" value="S70308"/>
</dbReference>
<dbReference type="RefSeq" id="NP_010836.1">
    <property type="nucleotide sequence ID" value="NM_001180855.1"/>
</dbReference>
<dbReference type="RefSeq" id="NP_013569.1">
    <property type="nucleotide sequence ID" value="NM_001182352.1"/>
</dbReference>
<dbReference type="SMR" id="P0CX16"/>
<dbReference type="BioGRID" id="31721">
    <property type="interactions" value="48"/>
</dbReference>
<dbReference type="BioGRID" id="36655">
    <property type="interactions" value="4"/>
</dbReference>
<dbReference type="FunCoup" id="P0CX16">
    <property type="interactions" value="39"/>
</dbReference>
<dbReference type="STRING" id="4932.YEL076C-A"/>
<dbReference type="PaxDb" id="4932-YEL076C-A"/>
<dbReference type="PeptideAtlas" id="P0CX16"/>
<dbReference type="EnsemblFungi" id="YEL076C-A_mRNA">
    <property type="protein sequence ID" value="YEL076C-A"/>
    <property type="gene ID" value="YEL076C-A"/>
</dbReference>
<dbReference type="EnsemblFungi" id="YLR464W_mRNA">
    <property type="protein sequence ID" value="YLR464W"/>
    <property type="gene ID" value="YLR464W"/>
</dbReference>
<dbReference type="GeneID" id="856632"/>
<dbReference type="KEGG" id="sce:YEL076C-A"/>
<dbReference type="KEGG" id="sce:YLR464W"/>
<dbReference type="AGR" id="SGD:S000002955"/>
<dbReference type="SGD" id="S000002955">
    <property type="gene designation" value="YEL076C-A"/>
</dbReference>
<dbReference type="VEuPathDB" id="FungiDB:YEL076C-A"/>
<dbReference type="VEuPathDB" id="FungiDB:YLR464W"/>
<dbReference type="HOGENOM" id="CLU_1278507_0_0_1"/>
<dbReference type="InParanoid" id="P0CX16"/>
<dbReference type="OrthoDB" id="4039556at2759"/>
<dbReference type="BioCyc" id="YEAST:G3O-30352-MONOMER"/>
<dbReference type="Proteomes" id="UP000002311">
    <property type="component" value="Chromosome V"/>
</dbReference>
<dbReference type="RNAct" id="P0CX16">
    <property type="molecule type" value="protein"/>
</dbReference>
<dbReference type="InterPro" id="IPR050978">
    <property type="entry name" value="Y'_ATP-dependent_helicase"/>
</dbReference>
<dbReference type="PANTHER" id="PTHR31583">
    <property type="match status" value="1"/>
</dbReference>
<dbReference type="PANTHER" id="PTHR31583:SF2">
    <property type="match status" value="1"/>
</dbReference>
<organism>
    <name type="scientific">Saccharomyces cerevisiae (strain ATCC 204508 / S288c)</name>
    <name type="common">Baker's yeast</name>
    <dbReference type="NCBI Taxonomy" id="559292"/>
    <lineage>
        <taxon>Eukaryota</taxon>
        <taxon>Fungi</taxon>
        <taxon>Dikarya</taxon>
        <taxon>Ascomycota</taxon>
        <taxon>Saccharomycotina</taxon>
        <taxon>Saccharomycetes</taxon>
        <taxon>Saccharomycetales</taxon>
        <taxon>Saccharomycetaceae</taxon>
        <taxon>Saccharomyces</taxon>
    </lineage>
</organism>
<feature type="chain" id="PRO_0000268170" description="Putative uncharacterized protein YEL076C-A">
    <location>
        <begin position="1"/>
        <end position="216"/>
    </location>
</feature>
<evidence type="ECO:0000305" key="1"/>
<keyword id="KW-1185">Reference proteome</keyword>
<proteinExistence type="uncertain"/>
<gene>
    <name type="ordered locus">YEL076C-A</name>
</gene>
<protein>
    <recommendedName>
        <fullName>Putative uncharacterized protein YEL076C-A</fullName>
    </recommendedName>
</protein>
<name>YE076_YEAST</name>